<name>VPP1_XENTR</name>
<dbReference type="EMBL" id="BC128641">
    <property type="protein sequence ID" value="AAI28642.1"/>
    <property type="molecule type" value="mRNA"/>
</dbReference>
<dbReference type="RefSeq" id="NP_001090714.1">
    <property type="nucleotide sequence ID" value="NM_001097245.1"/>
</dbReference>
<dbReference type="SMR" id="A1A5G6"/>
<dbReference type="FunCoup" id="A1A5G6">
    <property type="interactions" value="3033"/>
</dbReference>
<dbReference type="STRING" id="8364.ENSXETP00000023857"/>
<dbReference type="PaxDb" id="8364-ENSXETP00000016620"/>
<dbReference type="GeneID" id="100036694"/>
<dbReference type="KEGG" id="xtr:100036694"/>
<dbReference type="AGR" id="Xenbase:XB-GENE-959346"/>
<dbReference type="CTD" id="535"/>
<dbReference type="Xenbase" id="XB-GENE-959346">
    <property type="gene designation" value="atp6v0a1"/>
</dbReference>
<dbReference type="eggNOG" id="KOG2189">
    <property type="taxonomic scope" value="Eukaryota"/>
</dbReference>
<dbReference type="HOGENOM" id="CLU_005230_0_0_1"/>
<dbReference type="InParanoid" id="A1A5G6"/>
<dbReference type="OrthoDB" id="10264220at2759"/>
<dbReference type="TreeFam" id="TF300346"/>
<dbReference type="Reactome" id="R-XTR-1222556">
    <property type="pathway name" value="ROS and RNS production in phagocytes"/>
</dbReference>
<dbReference type="Reactome" id="R-XTR-6798695">
    <property type="pathway name" value="Neutrophil degranulation"/>
</dbReference>
<dbReference type="Reactome" id="R-XTR-77387">
    <property type="pathway name" value="Insulin receptor recycling"/>
</dbReference>
<dbReference type="Reactome" id="R-XTR-917977">
    <property type="pathway name" value="Transferrin endocytosis and recycling"/>
</dbReference>
<dbReference type="Reactome" id="R-XTR-983712">
    <property type="pathway name" value="Ion channel transport"/>
</dbReference>
<dbReference type="Proteomes" id="UP000008143">
    <property type="component" value="Chromosome 10"/>
</dbReference>
<dbReference type="Bgee" id="ENSXETG00000007635">
    <property type="expression patterns" value="Expressed in brain and 12 other cell types or tissues"/>
</dbReference>
<dbReference type="GO" id="GO:0030665">
    <property type="term" value="C:clathrin-coated vesicle membrane"/>
    <property type="evidence" value="ECO:0007669"/>
    <property type="project" value="UniProtKB-SubCell"/>
</dbReference>
<dbReference type="GO" id="GO:0042470">
    <property type="term" value="C:melanosome"/>
    <property type="evidence" value="ECO:0007669"/>
    <property type="project" value="UniProtKB-SubCell"/>
</dbReference>
<dbReference type="GO" id="GO:0030672">
    <property type="term" value="C:synaptic vesicle membrane"/>
    <property type="evidence" value="ECO:0007669"/>
    <property type="project" value="UniProtKB-SubCell"/>
</dbReference>
<dbReference type="GO" id="GO:0000220">
    <property type="term" value="C:vacuolar proton-transporting V-type ATPase, V0 domain"/>
    <property type="evidence" value="ECO:0007669"/>
    <property type="project" value="InterPro"/>
</dbReference>
<dbReference type="GO" id="GO:0046961">
    <property type="term" value="F:proton-transporting ATPase activity, rotational mechanism"/>
    <property type="evidence" value="ECO:0007669"/>
    <property type="project" value="InterPro"/>
</dbReference>
<dbReference type="InterPro" id="IPR002490">
    <property type="entry name" value="V-ATPase_116kDa_su"/>
</dbReference>
<dbReference type="InterPro" id="IPR026028">
    <property type="entry name" value="V-type_ATPase_116kDa_su_euka"/>
</dbReference>
<dbReference type="PANTHER" id="PTHR11629:SF68">
    <property type="entry name" value="V-TYPE PROTON ATPASE 116 KDA SUBUNIT A 1"/>
    <property type="match status" value="1"/>
</dbReference>
<dbReference type="PANTHER" id="PTHR11629">
    <property type="entry name" value="VACUOLAR PROTON ATPASES"/>
    <property type="match status" value="1"/>
</dbReference>
<dbReference type="Pfam" id="PF01496">
    <property type="entry name" value="V_ATPase_I"/>
    <property type="match status" value="1"/>
</dbReference>
<dbReference type="PIRSF" id="PIRSF001293">
    <property type="entry name" value="ATP6V0A1"/>
    <property type="match status" value="1"/>
</dbReference>
<proteinExistence type="evidence at transcript level"/>
<reference key="1">
    <citation type="submission" date="2006-12" db="EMBL/GenBank/DDBJ databases">
        <authorList>
            <consortium name="NIH - Xenopus Gene Collection (XGC) project"/>
        </authorList>
    </citation>
    <scope>NUCLEOTIDE SEQUENCE [LARGE SCALE MRNA]</scope>
    <source>
        <tissue>Brain</tissue>
    </source>
</reference>
<protein>
    <recommendedName>
        <fullName>V-type proton ATPase 116 kDa subunit a 1</fullName>
        <shortName>V-ATPase 116 kDa subunit a 1</shortName>
    </recommendedName>
    <alternativeName>
        <fullName>Vacuolar proton translocating ATPase 116 kDa subunit a isoform 1</fullName>
    </alternativeName>
</protein>
<gene>
    <name type="primary">atp6v0a1</name>
</gene>
<sequence>MGELFRSEEMTLAQLFLQSEAAYCCVSELGELGKVQFRDLNPDVNVFQRKFVNEVRRCEEMDRKLRFVEKEVKKANISILDTGENPEVPFPRDMIDLEANFEKIEIELKEINTNQEALKRNFLELTELKFILRKTQQFFDEMADPDLLEESSSLLEPSEMGRGAPLRLGFVAGVINRERIPTFERMLWRVCRGNVFLRQAEIENPLEDPVTGDSVHKSVFIIFFQGDQLKNRVKKICEGFRASLYPCPETPQERKEMATGVNTRIEDLQMVLNQTEDHRQRVLQAAAKSLRVWFIKVRKMKAIYHTLNLCNIDVTQKCLIAEVWCPVADLDSIQFALRRGTEHSGSTVPSILNRMQTNQTPPTYNKTNKFTYGFQNLVDAYGIGSYREINPAPYTIITFPFLFAVMFGDFGHGILMTLFAVWMVVRESRILSQKIDNELFTMMFSGRYIILLMGLFSIYTGLIYNDCFSKALNLFGSSWSVRPMFTDTWSEDLLKHTSVLQLNPNVTGVFNGPYPFGIDPIWSLATNKLTFLNSFKMKMSVVLGIIHMTFGVALSLLNHIYFKKPLNIYLGFIPEMIFMTTLFGYLVILIIYKWCAYDASTSMVAPSLLIHFINMFLFSYQDTSLPMLYKGQMGLQCFLVVCAIICVPWMLVVKPLILRRQYLRRKHLGTHNFGGIRVGNGPTEEDAEIIQHDQLSMHSEEGEEPAMEEVFDFGDTVVHQAIHTIEYCLGCISNTASYLRLWALSLAHAQLSEVLWTMVMHVGLSIRSLGGGIALVFVFSAFATLTIAILLIMEGLSAFLHALRLHWVEFQNKFYMGTGFKFLPFSFENIREGKFDE</sequence>
<comment type="function">
    <text evidence="1 3 4">Subunit of the V0 complex of vacuolar(H+)-ATPase (V-ATPase), a multisubunit enzyme composed of a peripheral complex (V1) that hydrolyzes ATP and a membrane integral complex (V0) that translocates protons (By similarity). V-ATPase is responsible for acidifying and maintaining the pH of intracellular compartments and in some cell types, is targeted to the plasma membrane, where it is responsible for acidifying the extracellular environment (By similarity). Required for assembly and activity of the vacuolar ATPase (By similarity).</text>
</comment>
<comment type="subunit">
    <text evidence="4">V-ATPase is a heteromultimeric enzyme made up of two complexes: the ATP-hydrolytic V1 complex and the proton translocation V0 complex (By similarity). The V1 complex consists of three catalytic AB heterodimers that form a heterohexamer, three peripheral stalks each consisting of EG heterodimers, one central rotor including subunits D and F, and the regulatory subunits C and H (By similarity). The proton translocation complex V0 consists of the proton transport subunit a, a ring of proteolipid subunits c9c'', rotary subunit d, subunits e and f, and two accessory subunits (By similarity).</text>
</comment>
<comment type="subcellular location">
    <subcellularLocation>
        <location evidence="2">Cytoplasmic vesicle</location>
        <location evidence="2">Clathrin-coated vesicle membrane</location>
        <topology evidence="6">Multi-pass membrane protein</topology>
    </subcellularLocation>
    <subcellularLocation>
        <location evidence="2">Cytoplasmic vesicle</location>
        <location evidence="2">Secretory vesicle</location>
        <location evidence="2">Synaptic vesicle membrane</location>
        <topology evidence="6">Multi-pass membrane protein</topology>
    </subcellularLocation>
    <subcellularLocation>
        <location evidence="5">Melanosome</location>
    </subcellularLocation>
</comment>
<comment type="similarity">
    <text evidence="7">Belongs to the V-ATPase 116 kDa subunit family.</text>
</comment>
<evidence type="ECO:0000250" key="1">
    <source>
        <dbReference type="UniProtKB" id="G5EGP4"/>
    </source>
</evidence>
<evidence type="ECO:0000250" key="2">
    <source>
        <dbReference type="UniProtKB" id="P25286"/>
    </source>
</evidence>
<evidence type="ECO:0000250" key="3">
    <source>
        <dbReference type="UniProtKB" id="P32563"/>
    </source>
</evidence>
<evidence type="ECO:0000250" key="4">
    <source>
        <dbReference type="UniProtKB" id="Q29466"/>
    </source>
</evidence>
<evidence type="ECO:0000250" key="5">
    <source>
        <dbReference type="UniProtKB" id="Q93050"/>
    </source>
</evidence>
<evidence type="ECO:0000255" key="6"/>
<evidence type="ECO:0000305" key="7"/>
<accession>A1A5G6</accession>
<feature type="chain" id="PRO_0000317419" description="V-type proton ATPase 116 kDa subunit a 1">
    <location>
        <begin position="1"/>
        <end position="837"/>
    </location>
</feature>
<feature type="topological domain" description="Cytoplasmic" evidence="6">
    <location>
        <begin position="1"/>
        <end position="388"/>
    </location>
</feature>
<feature type="transmembrane region" description="Helical" evidence="6">
    <location>
        <begin position="389"/>
        <end position="407"/>
    </location>
</feature>
<feature type="topological domain" description="Vacuolar" evidence="6">
    <location>
        <begin position="408"/>
        <end position="409"/>
    </location>
</feature>
<feature type="transmembrane region" description="Helical" evidence="6">
    <location>
        <begin position="410"/>
        <end position="426"/>
    </location>
</feature>
<feature type="topological domain" description="Cytoplasmic" evidence="6">
    <location>
        <begin position="427"/>
        <end position="441"/>
    </location>
</feature>
<feature type="transmembrane region" description="Helical" evidence="6">
    <location>
        <begin position="442"/>
        <end position="471"/>
    </location>
</feature>
<feature type="topological domain" description="Vacuolar" evidence="6">
    <location>
        <begin position="472"/>
        <end position="534"/>
    </location>
</feature>
<feature type="transmembrane region" description="Helical" evidence="6">
    <location>
        <begin position="535"/>
        <end position="554"/>
    </location>
</feature>
<feature type="topological domain" description="Cytoplasmic" evidence="6">
    <location>
        <begin position="555"/>
        <end position="572"/>
    </location>
</feature>
<feature type="transmembrane region" description="Helical" evidence="6">
    <location>
        <begin position="573"/>
        <end position="593"/>
    </location>
</feature>
<feature type="topological domain" description="Vacuolar" evidence="6">
    <location>
        <begin position="594"/>
        <end position="638"/>
    </location>
</feature>
<feature type="transmembrane region" description="Helical" evidence="6">
    <location>
        <begin position="639"/>
        <end position="658"/>
    </location>
</feature>
<feature type="topological domain" description="Cytoplasmic" evidence="6">
    <location>
        <begin position="659"/>
        <end position="724"/>
    </location>
</feature>
<feature type="transmembrane region" description="Helical" evidence="6">
    <location>
        <begin position="725"/>
        <end position="749"/>
    </location>
</feature>
<feature type="topological domain" description="Vacuolar" evidence="6">
    <location>
        <begin position="750"/>
        <end position="770"/>
    </location>
</feature>
<feature type="transmembrane region" description="Helical" evidence="6">
    <location>
        <begin position="771"/>
        <end position="809"/>
    </location>
</feature>
<feature type="topological domain" description="Cytoplasmic" evidence="6">
    <location>
        <begin position="810"/>
        <end position="837"/>
    </location>
</feature>
<keyword id="KW-0968">Cytoplasmic vesicle</keyword>
<keyword id="KW-0375">Hydrogen ion transport</keyword>
<keyword id="KW-0406">Ion transport</keyword>
<keyword id="KW-0472">Membrane</keyword>
<keyword id="KW-1185">Reference proteome</keyword>
<keyword id="KW-0770">Synapse</keyword>
<keyword id="KW-0812">Transmembrane</keyword>
<keyword id="KW-1133">Transmembrane helix</keyword>
<keyword id="KW-0813">Transport</keyword>
<organism>
    <name type="scientific">Xenopus tropicalis</name>
    <name type="common">Western clawed frog</name>
    <name type="synonym">Silurana tropicalis</name>
    <dbReference type="NCBI Taxonomy" id="8364"/>
    <lineage>
        <taxon>Eukaryota</taxon>
        <taxon>Metazoa</taxon>
        <taxon>Chordata</taxon>
        <taxon>Craniata</taxon>
        <taxon>Vertebrata</taxon>
        <taxon>Euteleostomi</taxon>
        <taxon>Amphibia</taxon>
        <taxon>Batrachia</taxon>
        <taxon>Anura</taxon>
        <taxon>Pipoidea</taxon>
        <taxon>Pipidae</taxon>
        <taxon>Xenopodinae</taxon>
        <taxon>Xenopus</taxon>
        <taxon>Silurana</taxon>
    </lineage>
</organism>